<sequence>MKLSATTLTAASLIGYSTIVSALPYAADIDTGCTTTAHGSHQHKRAVAVTYVYETVTVDKNGQTVTPTSTEASSTVASTTTLISESSVTKSSSKVASSSESTEQIATTSSSAQTTLTSSETSTSESSVPISTSGSASTSSAASSATGSIYGDLADFSGPYEKFEDGTIPCGQFPSGQGVIPISWLDEGGWSGVENTDTSTGGSCKEGSYCSYACQPGMSKTQWPSDQPSDGRSIGGLLCKDGYLYRSNTDTDYLCEWGVDAAYVVSELSNDVAICRTDYPGTENMVIPTYVQAGDSLPLTVVDQDTYYTWQGLKTSAQYYVNNAGISVEDACVWGSSSSGVGNWAPLNFGAGSSDGVAYLSLIPNPNNGNALNFNVKIVAADDSSTVNGECIYENGSFSGGSDGCTVSVTAGKAKFVLYN</sequence>
<name>SUN4_YEAST</name>
<dbReference type="EC" id="3.2.1.-"/>
<dbReference type="EMBL" id="U12141">
    <property type="protein sequence ID" value="AAA99645.1"/>
    <property type="molecule type" value="Genomic_DNA"/>
</dbReference>
<dbReference type="EMBL" id="X86470">
    <property type="protein sequence ID" value="CAA60196.1"/>
    <property type="molecule type" value="Genomic_DNA"/>
</dbReference>
<dbReference type="EMBL" id="Z71342">
    <property type="protein sequence ID" value="CAA95939.1"/>
    <property type="molecule type" value="Genomic_DNA"/>
</dbReference>
<dbReference type="EMBL" id="AY693128">
    <property type="protein sequence ID" value="AAT93147.1"/>
    <property type="molecule type" value="Genomic_DNA"/>
</dbReference>
<dbReference type="EMBL" id="AY245796">
    <property type="protein sequence ID" value="AAP04346.1"/>
    <property type="molecule type" value="mRNA"/>
</dbReference>
<dbReference type="EMBL" id="EF123127">
    <property type="protein sequence ID" value="ABM97471.1"/>
    <property type="molecule type" value="mRNA"/>
</dbReference>
<dbReference type="EMBL" id="BK006947">
    <property type="protein sequence ID" value="DAA10480.1"/>
    <property type="molecule type" value="Genomic_DNA"/>
</dbReference>
<dbReference type="PIR" id="S53916">
    <property type="entry name" value="S53916"/>
</dbReference>
<dbReference type="RefSeq" id="NP_014333.1">
    <property type="nucleotide sequence ID" value="NM_001182904.1"/>
</dbReference>
<dbReference type="BioGRID" id="35757">
    <property type="interactions" value="132"/>
</dbReference>
<dbReference type="DIP" id="DIP-4365N"/>
<dbReference type="FunCoup" id="P53616">
    <property type="interactions" value="88"/>
</dbReference>
<dbReference type="IntAct" id="P53616">
    <property type="interactions" value="2"/>
</dbReference>
<dbReference type="STRING" id="4932.YNL066W"/>
<dbReference type="CAZy" id="GH132">
    <property type="family name" value="Glycoside Hydrolase Family 132"/>
</dbReference>
<dbReference type="GlyCosmos" id="P53616">
    <property type="glycosylation" value="1 site, No reported glycans"/>
</dbReference>
<dbReference type="GlyGen" id="P53616">
    <property type="glycosylation" value="1 site"/>
</dbReference>
<dbReference type="iPTMnet" id="P53616"/>
<dbReference type="PaxDb" id="4932-YNL066W"/>
<dbReference type="PeptideAtlas" id="P53616"/>
<dbReference type="EnsemblFungi" id="YNL066W_mRNA">
    <property type="protein sequence ID" value="YNL066W"/>
    <property type="gene ID" value="YNL066W"/>
</dbReference>
<dbReference type="GeneID" id="855659"/>
<dbReference type="KEGG" id="sce:YNL066W"/>
<dbReference type="AGR" id="SGD:S000005010"/>
<dbReference type="SGD" id="S000005010">
    <property type="gene designation" value="SUN4"/>
</dbReference>
<dbReference type="VEuPathDB" id="FungiDB:YNL066W"/>
<dbReference type="eggNOG" id="ENOG502QPVV">
    <property type="taxonomic scope" value="Eukaryota"/>
</dbReference>
<dbReference type="GeneTree" id="ENSGT00940000176328"/>
<dbReference type="HOGENOM" id="CLU_033459_2_0_1"/>
<dbReference type="InParanoid" id="P53616"/>
<dbReference type="OMA" id="ACVWGSS"/>
<dbReference type="OrthoDB" id="5339822at2759"/>
<dbReference type="BioCyc" id="YEAST:G3O-33096-MONOMER"/>
<dbReference type="BioGRID-ORCS" id="855659">
    <property type="hits" value="2 hits in 10 CRISPR screens"/>
</dbReference>
<dbReference type="PRO" id="PR:P53616"/>
<dbReference type="Proteomes" id="UP000002311">
    <property type="component" value="Chromosome XIV"/>
</dbReference>
<dbReference type="RNAct" id="P53616">
    <property type="molecule type" value="protein"/>
</dbReference>
<dbReference type="GO" id="GO:0009986">
    <property type="term" value="C:cell surface"/>
    <property type="evidence" value="ECO:0000318"/>
    <property type="project" value="GO_Central"/>
</dbReference>
<dbReference type="GO" id="GO:0005621">
    <property type="term" value="C:cellular bud scar"/>
    <property type="evidence" value="ECO:0000314"/>
    <property type="project" value="SGD"/>
</dbReference>
<dbReference type="GO" id="GO:0005576">
    <property type="term" value="C:extracellular region"/>
    <property type="evidence" value="ECO:0007669"/>
    <property type="project" value="UniProtKB-KW"/>
</dbReference>
<dbReference type="GO" id="GO:0009277">
    <property type="term" value="C:fungal-type cell wall"/>
    <property type="evidence" value="ECO:0000314"/>
    <property type="project" value="SGD"/>
</dbReference>
<dbReference type="GO" id="GO:0015926">
    <property type="term" value="F:glucosidase activity"/>
    <property type="evidence" value="ECO:0000250"/>
    <property type="project" value="SGD"/>
</dbReference>
<dbReference type="GO" id="GO:0000917">
    <property type="term" value="P:division septum assembly"/>
    <property type="evidence" value="ECO:0007669"/>
    <property type="project" value="UniProtKB-KW"/>
</dbReference>
<dbReference type="GO" id="GO:0031505">
    <property type="term" value="P:fungal-type cell wall organization"/>
    <property type="evidence" value="ECO:0000318"/>
    <property type="project" value="GO_Central"/>
</dbReference>
<dbReference type="GO" id="GO:0007005">
    <property type="term" value="P:mitochondrion organization"/>
    <property type="evidence" value="ECO:0000304"/>
    <property type="project" value="SGD"/>
</dbReference>
<dbReference type="GO" id="GO:0000272">
    <property type="term" value="P:polysaccharide catabolic process"/>
    <property type="evidence" value="ECO:0007669"/>
    <property type="project" value="UniProtKB-KW"/>
</dbReference>
<dbReference type="InterPro" id="IPR051526">
    <property type="entry name" value="Beta-Glucosidase_SUN"/>
</dbReference>
<dbReference type="InterPro" id="IPR005556">
    <property type="entry name" value="SUN"/>
</dbReference>
<dbReference type="PANTHER" id="PTHR31316">
    <property type="entry name" value="BETA-GLUCOSIDASE-LIKE PROTEIN NCA3, MITOCHONDRIAL-RELATED"/>
    <property type="match status" value="1"/>
</dbReference>
<dbReference type="PANTHER" id="PTHR31316:SF0">
    <property type="entry name" value="SECRETED BETA-GLUCOSIDASE SIM1-RELATED"/>
    <property type="match status" value="1"/>
</dbReference>
<dbReference type="Pfam" id="PF03856">
    <property type="entry name" value="SUN"/>
    <property type="match status" value="1"/>
</dbReference>
<reference key="1">
    <citation type="journal article" date="1995" name="Yeast">
        <title>The sequence of a 44 420 bp fragment located on the left arm of chromosome XIV from Saccharomyces cerevisiae.</title>
        <authorList>
            <person name="Bergez P."/>
            <person name="Doignon F."/>
            <person name="Crouzet M."/>
        </authorList>
    </citation>
    <scope>NUCLEOTIDE SEQUENCE [GENOMIC DNA]</scope>
    <source>
        <strain>S288c / FY1676</strain>
    </source>
</reference>
<reference key="2">
    <citation type="journal article" date="1996" name="Yeast">
        <authorList>
            <person name="Bergez P."/>
            <person name="Doignon F."/>
            <person name="Crouzet M."/>
        </authorList>
    </citation>
    <scope>ERRATUM OF PUBMED:8533472</scope>
</reference>
<reference key="3">
    <citation type="journal article" date="1996" name="Yeast">
        <title>Sequencing a cosmid clone of Saccharomyces cerevisiae chromosome XIV reveals 12 new open reading frames (ORFs) and an ancient duplication of six ORFs.</title>
        <authorList>
            <person name="Poehlmann R."/>
            <person name="Philippsen P."/>
        </authorList>
    </citation>
    <scope>NUCLEOTIDE SEQUENCE [GENOMIC DNA]</scope>
    <source>
        <strain>ATCC 96604 / S288c / FY1679</strain>
    </source>
</reference>
<reference key="4">
    <citation type="journal article" date="1997" name="Nature">
        <title>The nucleotide sequence of Saccharomyces cerevisiae chromosome XIV and its evolutionary implications.</title>
        <authorList>
            <person name="Philippsen P."/>
            <person name="Kleine K."/>
            <person name="Poehlmann R."/>
            <person name="Duesterhoeft A."/>
            <person name="Hamberg K."/>
            <person name="Hegemann J.H."/>
            <person name="Obermaier B."/>
            <person name="Urrestarazu L.A."/>
            <person name="Aert R."/>
            <person name="Albermann K."/>
            <person name="Altmann R."/>
            <person name="Andre B."/>
            <person name="Baladron V."/>
            <person name="Ballesta J.P.G."/>
            <person name="Becam A.-M."/>
            <person name="Beinhauer J.D."/>
            <person name="Boskovic J."/>
            <person name="Buitrago M.J."/>
            <person name="Bussereau F."/>
            <person name="Coster F."/>
            <person name="Crouzet M."/>
            <person name="D'Angelo M."/>
            <person name="Dal Pero F."/>
            <person name="De Antoni A."/>
            <person name="del Rey F."/>
            <person name="Doignon F."/>
            <person name="Domdey H."/>
            <person name="Dubois E."/>
            <person name="Fiedler T.A."/>
            <person name="Fleig U."/>
            <person name="Floeth M."/>
            <person name="Fritz C."/>
            <person name="Gaillardin C."/>
            <person name="Garcia-Cantalejo J.M."/>
            <person name="Glansdorff N."/>
            <person name="Goffeau A."/>
            <person name="Gueldener U."/>
            <person name="Herbert C.J."/>
            <person name="Heumann K."/>
            <person name="Heuss-Neitzel D."/>
            <person name="Hilbert H."/>
            <person name="Hinni K."/>
            <person name="Iraqui Houssaini I."/>
            <person name="Jacquet M."/>
            <person name="Jimenez A."/>
            <person name="Jonniaux J.-L."/>
            <person name="Karpfinger-Hartl L."/>
            <person name="Lanfranchi G."/>
            <person name="Lepingle A."/>
            <person name="Levesque H."/>
            <person name="Lyck R."/>
            <person name="Maftahi M."/>
            <person name="Mallet L."/>
            <person name="Maurer C.T.C."/>
            <person name="Messenguy F."/>
            <person name="Mewes H.-W."/>
            <person name="Moestl D."/>
            <person name="Nasr F."/>
            <person name="Nicaud J.-M."/>
            <person name="Niedenthal R.K."/>
            <person name="Pandolfo D."/>
            <person name="Pierard A."/>
            <person name="Piravandi E."/>
            <person name="Planta R.J."/>
            <person name="Pohl T.M."/>
            <person name="Purnelle B."/>
            <person name="Rebischung C."/>
            <person name="Remacha M.A."/>
            <person name="Revuelta J.L."/>
            <person name="Rinke M."/>
            <person name="Saiz J.E."/>
            <person name="Sartorello F."/>
            <person name="Scherens B."/>
            <person name="Sen-Gupta M."/>
            <person name="Soler-Mira A."/>
            <person name="Urbanus J.H.M."/>
            <person name="Valle G."/>
            <person name="Van Dyck L."/>
            <person name="Verhasselt P."/>
            <person name="Vierendeels F."/>
            <person name="Vissers S."/>
            <person name="Voet M."/>
            <person name="Volckaert G."/>
            <person name="Wach A."/>
            <person name="Wambutt R."/>
            <person name="Wedler H."/>
            <person name="Zollner A."/>
            <person name="Hani J."/>
        </authorList>
    </citation>
    <scope>NUCLEOTIDE SEQUENCE [LARGE SCALE GENOMIC DNA]</scope>
    <source>
        <strain>ATCC 204508 / S288c</strain>
    </source>
</reference>
<reference key="5">
    <citation type="journal article" date="2014" name="G3 (Bethesda)">
        <title>The reference genome sequence of Saccharomyces cerevisiae: Then and now.</title>
        <authorList>
            <person name="Engel S.R."/>
            <person name="Dietrich F.S."/>
            <person name="Fisk D.G."/>
            <person name="Binkley G."/>
            <person name="Balakrishnan R."/>
            <person name="Costanzo M.C."/>
            <person name="Dwight S.S."/>
            <person name="Hitz B.C."/>
            <person name="Karra K."/>
            <person name="Nash R.S."/>
            <person name="Weng S."/>
            <person name="Wong E.D."/>
            <person name="Lloyd P."/>
            <person name="Skrzypek M.S."/>
            <person name="Miyasato S.R."/>
            <person name="Simison M."/>
            <person name="Cherry J.M."/>
        </authorList>
    </citation>
    <scope>GENOME REANNOTATION</scope>
    <source>
        <strain>ATCC 204508 / S288c</strain>
    </source>
</reference>
<reference key="6">
    <citation type="journal article" date="2007" name="Genome Res.">
        <title>Approaching a complete repository of sequence-verified protein-encoding clones for Saccharomyces cerevisiae.</title>
        <authorList>
            <person name="Hu Y."/>
            <person name="Rolfs A."/>
            <person name="Bhullar B."/>
            <person name="Murthy T.V.S."/>
            <person name="Zhu C."/>
            <person name="Berger M.F."/>
            <person name="Camargo A.A."/>
            <person name="Kelley F."/>
            <person name="McCarron S."/>
            <person name="Jepson D."/>
            <person name="Richardson A."/>
            <person name="Raphael J."/>
            <person name="Moreira D."/>
            <person name="Taycher E."/>
            <person name="Zuo D."/>
            <person name="Mohr S."/>
            <person name="Kane M.F."/>
            <person name="Williamson J."/>
            <person name="Simpson A.J.G."/>
            <person name="Bulyk M.L."/>
            <person name="Harlow E."/>
            <person name="Marsischky G."/>
            <person name="Kolodner R.D."/>
            <person name="LaBaer J."/>
        </authorList>
    </citation>
    <scope>NUCLEOTIDE SEQUENCE [GENOMIC DNA]</scope>
    <source>
        <strain>ATCC 204508 / S288c</strain>
    </source>
</reference>
<reference key="7">
    <citation type="submission" date="2003-02" db="EMBL/GenBank/DDBJ databases">
        <title>YNL066W(SUN4) mRNA.</title>
        <authorList>
            <person name="Zhang Z."/>
            <person name="Dietrich F.S."/>
        </authorList>
    </citation>
    <scope>NUCLEOTIDE SEQUENCE [MRNA] OF 1-92</scope>
    <source>
        <strain>ATCC 204508 / S288c</strain>
    </source>
</reference>
<reference key="8">
    <citation type="journal article" date="2007" name="Proc. Natl. Acad. Sci. U.S.A.">
        <title>High-density yeast-tiling array reveals previously undiscovered introns and extensive regulation of meiotic splicing.</title>
        <authorList>
            <person name="Juneau K."/>
            <person name="Palm C."/>
            <person name="Miranda M."/>
            <person name="Davis R.W."/>
        </authorList>
    </citation>
    <scope>NUCLEOTIDE SEQUENCE [MRNA] OF 1-66</scope>
    <source>
        <strain>ATCC 201390 / BY4743</strain>
    </source>
</reference>
<reference key="9">
    <citation type="journal article" date="1998" name="J. Bacteriol.">
        <title>New potential cell wall glucanases of Saccharomyces cerevisiae and their involvement in mating.</title>
        <authorList>
            <person name="Cappellaro C."/>
            <person name="Mrsa V."/>
            <person name="Tanner W."/>
        </authorList>
    </citation>
    <scope>PROTEIN SEQUENCE OF 25-35</scope>
    <scope>SUBCELLULAR LOCATION</scope>
    <source>
        <strain>ATCC 96099 / S288c / SEY6210</strain>
    </source>
</reference>
<reference key="10">
    <citation type="journal article" date="2000" name="Yeast">
        <title>The 'SUN' family: yeast SUN4/SCW3 is involved in cell septation.</title>
        <authorList>
            <person name="Mouassite M."/>
            <person name="Camougrand N.M."/>
            <person name="Schwob E."/>
            <person name="Demaison G."/>
            <person name="Laclau M."/>
            <person name="Guerin M.G."/>
        </authorList>
    </citation>
    <scope>FUNCTION</scope>
</reference>
<reference key="11">
    <citation type="journal article" date="2003" name="Nature">
        <title>Global analysis of protein expression in yeast.</title>
        <authorList>
            <person name="Ghaemmaghami S."/>
            <person name="Huh W.-K."/>
            <person name="Bower K."/>
            <person name="Howson R.W."/>
            <person name="Belle A."/>
            <person name="Dephoure N."/>
            <person name="O'Shea E.K."/>
            <person name="Weissman J.S."/>
        </authorList>
    </citation>
    <scope>LEVEL OF PROTEIN EXPRESSION [LARGE SCALE ANALYSIS]</scope>
</reference>
<reference key="12">
    <citation type="journal article" date="2013" name="PLoS ONE">
        <title>SUN family proteins Sun4p, Uth1p and Sim1p are secreted from Saccharomyces cerevisiae and produced dependently on oxygen level.</title>
        <authorList>
            <person name="Kuznetsov E."/>
            <person name="Kucerova H."/>
            <person name="Vachova L."/>
            <person name="Palkova Z."/>
        </authorList>
    </citation>
    <scope>SUBCELLULAR LOCATION</scope>
    <scope>INDUCTION</scope>
    <scope>DISRUPTION PHENOTYPE</scope>
    <scope>FUNCTION</scope>
</reference>
<proteinExistence type="evidence at protein level"/>
<comment type="function">
    <text evidence="3 5">Involved in the remodeling of the cell wall during the various phases of yeast culture development and under various environmental conditions and plays a role in septation.</text>
</comment>
<comment type="subcellular location">
    <subcellularLocation>
        <location evidence="5 6">Secreted</location>
        <location evidence="5 6">Cell wall</location>
    </subcellularLocation>
</comment>
<comment type="induction">
    <text evidence="5">Expression is decreased during transition to slow growing or stationary phases.</text>
</comment>
<comment type="PTM">
    <text>Glycosylated.</text>
</comment>
<comment type="disruption phenotype">
    <text evidence="5">Leads to increased resistance to zymolyase treatment.</text>
</comment>
<comment type="miscellaneous">
    <text evidence="4">Present with 24700 molecules/cell in log phase SD medium.</text>
</comment>
<comment type="similarity">
    <text evidence="7">Belongs to the SUN family.</text>
</comment>
<protein>
    <recommendedName>
        <fullName>Probable secreted beta-glucosidase SUN4</fullName>
        <ecNumber>3.2.1.-</ecNumber>
    </recommendedName>
    <alternativeName>
        <fullName>Septation protein SUN4</fullName>
    </alternativeName>
    <alternativeName>
        <fullName>Soluble cell wall protein 3</fullName>
    </alternativeName>
</protein>
<gene>
    <name type="primary">SUN4</name>
    <name type="synonym">SCW3</name>
    <name type="ordered locus">YNL066W</name>
    <name type="ORF">N2411</name>
    <name type="ORF">YNL2411W</name>
</gene>
<feature type="signal peptide" evidence="6">
    <location>
        <begin position="1"/>
        <end position="24"/>
    </location>
</feature>
<feature type="chain" id="PRO_0000033466" description="Probable secreted beta-glucosidase SUN4">
    <location>
        <begin position="25"/>
        <end position="420"/>
    </location>
</feature>
<feature type="region of interest" description="Disordered" evidence="2">
    <location>
        <begin position="89"/>
        <end position="145"/>
    </location>
</feature>
<feature type="glycosylation site" description="N-linked (GlcNAc...) asparagine" evidence="1">
    <location>
        <position position="395"/>
    </location>
</feature>
<feature type="sequence conflict" description="In Ref. 6; AAT93147." evidence="7" ref="6">
    <original>L</original>
    <variation>S</variation>
    <location>
        <position position="299"/>
    </location>
</feature>
<evidence type="ECO:0000255" key="1"/>
<evidence type="ECO:0000256" key="2">
    <source>
        <dbReference type="SAM" id="MobiDB-lite"/>
    </source>
</evidence>
<evidence type="ECO:0000269" key="3">
    <source>
    </source>
</evidence>
<evidence type="ECO:0000269" key="4">
    <source>
    </source>
</evidence>
<evidence type="ECO:0000269" key="5">
    <source>
    </source>
</evidence>
<evidence type="ECO:0000269" key="6">
    <source>
    </source>
</evidence>
<evidence type="ECO:0000305" key="7"/>
<accession>P53616</accession>
<accession>A2TBM4</accession>
<accession>D6W1B4</accession>
<accession>Q6B1F2</accession>
<accession>Q870H0</accession>
<organism>
    <name type="scientific">Saccharomyces cerevisiae (strain ATCC 204508 / S288c)</name>
    <name type="common">Baker's yeast</name>
    <dbReference type="NCBI Taxonomy" id="559292"/>
    <lineage>
        <taxon>Eukaryota</taxon>
        <taxon>Fungi</taxon>
        <taxon>Dikarya</taxon>
        <taxon>Ascomycota</taxon>
        <taxon>Saccharomycotina</taxon>
        <taxon>Saccharomycetes</taxon>
        <taxon>Saccharomycetales</taxon>
        <taxon>Saccharomycetaceae</taxon>
        <taxon>Saccharomyces</taxon>
    </lineage>
</organism>
<keyword id="KW-0119">Carbohydrate metabolism</keyword>
<keyword id="KW-0131">Cell cycle</keyword>
<keyword id="KW-0132">Cell division</keyword>
<keyword id="KW-0134">Cell wall</keyword>
<keyword id="KW-0961">Cell wall biogenesis/degradation</keyword>
<keyword id="KW-0903">Direct protein sequencing</keyword>
<keyword id="KW-0325">Glycoprotein</keyword>
<keyword id="KW-0326">Glycosidase</keyword>
<keyword id="KW-0378">Hydrolase</keyword>
<keyword id="KW-0624">Polysaccharide degradation</keyword>
<keyword id="KW-1185">Reference proteome</keyword>
<keyword id="KW-0964">Secreted</keyword>
<keyword id="KW-0717">Septation</keyword>
<keyword id="KW-0732">Signal</keyword>